<evidence type="ECO:0000255" key="1">
    <source>
        <dbReference type="HAMAP-Rule" id="MF_03193"/>
    </source>
</evidence>
<reference key="1">
    <citation type="journal article" date="2005" name="Nature">
        <title>The genome of the social amoeba Dictyostelium discoideum.</title>
        <authorList>
            <person name="Eichinger L."/>
            <person name="Pachebat J.A."/>
            <person name="Gloeckner G."/>
            <person name="Rajandream M.A."/>
            <person name="Sucgang R."/>
            <person name="Berriman M."/>
            <person name="Song J."/>
            <person name="Olsen R."/>
            <person name="Szafranski K."/>
            <person name="Xu Q."/>
            <person name="Tunggal B."/>
            <person name="Kummerfeld S."/>
            <person name="Madera M."/>
            <person name="Konfortov B.A."/>
            <person name="Rivero F."/>
            <person name="Bankier A.T."/>
            <person name="Lehmann R."/>
            <person name="Hamlin N."/>
            <person name="Davies R."/>
            <person name="Gaudet P."/>
            <person name="Fey P."/>
            <person name="Pilcher K."/>
            <person name="Chen G."/>
            <person name="Saunders D."/>
            <person name="Sodergren E.J."/>
            <person name="Davis P."/>
            <person name="Kerhornou A."/>
            <person name="Nie X."/>
            <person name="Hall N."/>
            <person name="Anjard C."/>
            <person name="Hemphill L."/>
            <person name="Bason N."/>
            <person name="Farbrother P."/>
            <person name="Desany B."/>
            <person name="Just E."/>
            <person name="Morio T."/>
            <person name="Rost R."/>
            <person name="Churcher C.M."/>
            <person name="Cooper J."/>
            <person name="Haydock S."/>
            <person name="van Driessche N."/>
            <person name="Cronin A."/>
            <person name="Goodhead I."/>
            <person name="Muzny D.M."/>
            <person name="Mourier T."/>
            <person name="Pain A."/>
            <person name="Lu M."/>
            <person name="Harper D."/>
            <person name="Lindsay R."/>
            <person name="Hauser H."/>
            <person name="James K.D."/>
            <person name="Quiles M."/>
            <person name="Madan Babu M."/>
            <person name="Saito T."/>
            <person name="Buchrieser C."/>
            <person name="Wardroper A."/>
            <person name="Felder M."/>
            <person name="Thangavelu M."/>
            <person name="Johnson D."/>
            <person name="Knights A."/>
            <person name="Loulseged H."/>
            <person name="Mungall K.L."/>
            <person name="Oliver K."/>
            <person name="Price C."/>
            <person name="Quail M.A."/>
            <person name="Urushihara H."/>
            <person name="Hernandez J."/>
            <person name="Rabbinowitsch E."/>
            <person name="Steffen D."/>
            <person name="Sanders M."/>
            <person name="Ma J."/>
            <person name="Kohara Y."/>
            <person name="Sharp S."/>
            <person name="Simmonds M.N."/>
            <person name="Spiegler S."/>
            <person name="Tivey A."/>
            <person name="Sugano S."/>
            <person name="White B."/>
            <person name="Walker D."/>
            <person name="Woodward J.R."/>
            <person name="Winckler T."/>
            <person name="Tanaka Y."/>
            <person name="Shaulsky G."/>
            <person name="Schleicher M."/>
            <person name="Weinstock G.M."/>
            <person name="Rosenthal A."/>
            <person name="Cox E.C."/>
            <person name="Chisholm R.L."/>
            <person name="Gibbs R.A."/>
            <person name="Loomis W.F."/>
            <person name="Platzer M."/>
            <person name="Kay R.R."/>
            <person name="Williams J.G."/>
            <person name="Dear P.H."/>
            <person name="Noegel A.A."/>
            <person name="Barrell B.G."/>
            <person name="Kuspa A."/>
        </authorList>
    </citation>
    <scope>NUCLEOTIDE SEQUENCE [LARGE SCALE GENOMIC DNA]</scope>
    <source>
        <strain>AX4</strain>
    </source>
</reference>
<proteinExistence type="inferred from homology"/>
<gene>
    <name evidence="1" type="primary">coq6</name>
    <name type="ORF">DDB_G0291440</name>
</gene>
<name>COQ6_DICDI</name>
<comment type="function">
    <text evidence="1">FAD-dependent monooxygenase required for two non-consecutive steps during ubiquinone biosynthesis. Required for the C5-ring hydroxylation during ubiquinone biosynthesis by catalyzing the hydroxylation of 4-hydroxy-3-(all-trans-polyprenyl)benzoic acid to 3,4-dihydroxy-5-(all-trans-polyprenyl)benzoic acid. Also acts downstream of coq4, for the C1-hydroxylation during ubiquinone biosynthesis by catalyzing the hydroxylation of 2-methoxy-6-(all-trans-polyprenyl)phenol to 2-methoxy-6-(all-trans-polyprenyl)benzene-1,4-diol. The electrons required for the hydroxylation reaction are funneled indirectly to coq6 from NADPH via a ferredoxin/ferredoxin reductase system.</text>
</comment>
<comment type="catalytic activity">
    <reaction evidence="1">
        <text>a 4-hydroxy-3-(all-trans-polyprenyl)benzoate + 2 reduced [2Fe-2S]-[ferredoxin] + O2 + 2 H(+) = a 3,4-dihydroxy-5-(all-trans-polyprenyl)benzoate + 2 oxidized [2Fe-2S]-[ferredoxin] + H2O</text>
        <dbReference type="Rhea" id="RHEA:81195"/>
        <dbReference type="Rhea" id="RHEA-COMP:9514"/>
        <dbReference type="Rhea" id="RHEA-COMP:10000"/>
        <dbReference type="Rhea" id="RHEA-COMP:10001"/>
        <dbReference type="Rhea" id="RHEA-COMP:10930"/>
        <dbReference type="ChEBI" id="CHEBI:15377"/>
        <dbReference type="ChEBI" id="CHEBI:15378"/>
        <dbReference type="ChEBI" id="CHEBI:15379"/>
        <dbReference type="ChEBI" id="CHEBI:33737"/>
        <dbReference type="ChEBI" id="CHEBI:33738"/>
        <dbReference type="ChEBI" id="CHEBI:64694"/>
        <dbReference type="ChEBI" id="CHEBI:78396"/>
        <dbReference type="EC" id="1.14.15.45"/>
    </reaction>
</comment>
<comment type="catalytic activity">
    <reaction evidence="1">
        <text>a 2-methoxy-6-(all-trans-polyprenyl)phenol + 2 reduced [2Fe-2S]-[ferredoxin] + O2 + 2 H(+) = a 2-methoxy-6-(all-trans-polyprenyl)benzene-1,4-diol + 2 oxidized [2Fe-2S]-[ferredoxin] + H2O</text>
        <dbReference type="Rhea" id="RHEA:81183"/>
        <dbReference type="Rhea" id="RHEA-COMP:9551"/>
        <dbReference type="Rhea" id="RHEA-COMP:10000"/>
        <dbReference type="Rhea" id="RHEA-COMP:10001"/>
        <dbReference type="Rhea" id="RHEA-COMP:10858"/>
        <dbReference type="ChEBI" id="CHEBI:15377"/>
        <dbReference type="ChEBI" id="CHEBI:15378"/>
        <dbReference type="ChEBI" id="CHEBI:15379"/>
        <dbReference type="ChEBI" id="CHEBI:33737"/>
        <dbReference type="ChEBI" id="CHEBI:33738"/>
        <dbReference type="ChEBI" id="CHEBI:62731"/>
        <dbReference type="ChEBI" id="CHEBI:84166"/>
        <dbReference type="EC" id="1.14.15.46"/>
    </reaction>
</comment>
<comment type="cofactor">
    <cofactor evidence="1">
        <name>FAD</name>
        <dbReference type="ChEBI" id="CHEBI:57692"/>
    </cofactor>
</comment>
<comment type="pathway">
    <text evidence="1">Cofactor biosynthesis; ubiquinone biosynthesis.</text>
</comment>
<comment type="subunit">
    <text evidence="1">Component of a multi-subunit COQ enzyme complex.</text>
</comment>
<comment type="subcellular location">
    <subcellularLocation>
        <location evidence="1">Mitochondrion inner membrane</location>
        <topology evidence="1">Peripheral membrane protein</topology>
        <orientation evidence="1">Matrix side</orientation>
    </subcellularLocation>
</comment>
<comment type="miscellaneous">
    <text evidence="1">This protein may be expected to contain an N-terminal transit peptide but none has been predicted.</text>
</comment>
<comment type="similarity">
    <text evidence="1">Belongs to the UbiH/COQ6 family.</text>
</comment>
<sequence>MLRLINKTINKNDLIKINNSKRFCSTTTNSTINKDNIYDIIIIGGGLVGSTMACSIGNNNTTKHLKVALIESSKIQTVEQSISNAIPEIRTISFNNQTIELFKSINVWDTIKSTKRVNPFNQVRVWDTSGFEGIHFQDNDIIDDGNNTTAMGYIIENNIVTSSLLSKVKQFENIELFEQLSVKSMNDYNEETIRTTSILPSVTLSNDQQLHAKLIIGADGGNSILKKQLQVPSIGRVYNQKAVVCTLKLGIKQDNNNNSSNNNNNNNNTLFQRFLPTGPIALLPLANGYANIIWSTNLMHAQYLLELDDESFLEQVKDSFLKSPSTSNSSFFEIASNLFNLNPKGLSGNEIYLPPIEGLVSKRASFPLRIDHTFNYTLPRVCFIGDASHLVHPMAGQGVNLGMADVKTLSSIIEQSVQSGYDIGDAMMLKRFEEIRKPENLKMLLSIDTLFNLFTNNSIFVTGLRNFGMSLLNNISPLKNLIIGVSKGESILKFK</sequence>
<feature type="chain" id="PRO_0000328200" description="Ubiquinone biosynthesis monooxygenase COQ6, mitochondrial">
    <location>
        <begin position="1"/>
        <end position="495"/>
    </location>
</feature>
<keyword id="KW-0274">FAD</keyword>
<keyword id="KW-0285">Flavoprotein</keyword>
<keyword id="KW-0472">Membrane</keyword>
<keyword id="KW-0496">Mitochondrion</keyword>
<keyword id="KW-0999">Mitochondrion inner membrane</keyword>
<keyword id="KW-0503">Monooxygenase</keyword>
<keyword id="KW-0560">Oxidoreductase</keyword>
<keyword id="KW-1185">Reference proteome</keyword>
<keyword id="KW-0831">Ubiquinone biosynthesis</keyword>
<organism>
    <name type="scientific">Dictyostelium discoideum</name>
    <name type="common">Social amoeba</name>
    <dbReference type="NCBI Taxonomy" id="44689"/>
    <lineage>
        <taxon>Eukaryota</taxon>
        <taxon>Amoebozoa</taxon>
        <taxon>Evosea</taxon>
        <taxon>Eumycetozoa</taxon>
        <taxon>Dictyostelia</taxon>
        <taxon>Dictyosteliales</taxon>
        <taxon>Dictyosteliaceae</taxon>
        <taxon>Dictyostelium</taxon>
    </lineage>
</organism>
<protein>
    <recommendedName>
        <fullName evidence="1">Ubiquinone biosynthesis monooxygenase COQ6, mitochondrial</fullName>
        <ecNumber evidence="1">1.14.15.45</ecNumber>
    </recommendedName>
    <alternativeName>
        <fullName evidence="1">2-methoxy-6-polyprenolphenol 4-hydroxylase</fullName>
        <ecNumber evidence="1">1.14.15.46</ecNumber>
    </alternativeName>
</protein>
<accession>Q54EN1</accession>
<dbReference type="EC" id="1.14.15.45" evidence="1"/>
<dbReference type="EC" id="1.14.15.46" evidence="1"/>
<dbReference type="EMBL" id="AAFI02000177">
    <property type="protein sequence ID" value="EAL61704.1"/>
    <property type="molecule type" value="Genomic_DNA"/>
</dbReference>
<dbReference type="RefSeq" id="XP_635209.1">
    <property type="nucleotide sequence ID" value="XM_630117.1"/>
</dbReference>
<dbReference type="SMR" id="Q54EN1"/>
<dbReference type="FunCoup" id="Q54EN1">
    <property type="interactions" value="606"/>
</dbReference>
<dbReference type="STRING" id="44689.Q54EN1"/>
<dbReference type="PaxDb" id="44689-DDB0231594"/>
<dbReference type="EnsemblProtists" id="EAL61704">
    <property type="protein sequence ID" value="EAL61704"/>
    <property type="gene ID" value="DDB_G0291440"/>
</dbReference>
<dbReference type="GeneID" id="8628154"/>
<dbReference type="KEGG" id="ddi:DDB_G0291440"/>
<dbReference type="dictyBase" id="DDB_G0291440">
    <property type="gene designation" value="coq6"/>
</dbReference>
<dbReference type="VEuPathDB" id="AmoebaDB:DDB_G0291440"/>
<dbReference type="eggNOG" id="KOG3855">
    <property type="taxonomic scope" value="Eukaryota"/>
</dbReference>
<dbReference type="HOGENOM" id="CLU_009665_8_0_1"/>
<dbReference type="InParanoid" id="Q54EN1"/>
<dbReference type="OMA" id="VKQMQVW"/>
<dbReference type="PhylomeDB" id="Q54EN1"/>
<dbReference type="Reactome" id="R-DDI-2142789">
    <property type="pathway name" value="Ubiquinol biosynthesis"/>
</dbReference>
<dbReference type="UniPathway" id="UPA00232"/>
<dbReference type="PRO" id="PR:Q54EN1"/>
<dbReference type="Proteomes" id="UP000002195">
    <property type="component" value="Chromosome 6"/>
</dbReference>
<dbReference type="GO" id="GO:0031314">
    <property type="term" value="C:extrinsic component of mitochondrial inner membrane"/>
    <property type="evidence" value="ECO:0007669"/>
    <property type="project" value="UniProtKB-UniRule"/>
</dbReference>
<dbReference type="GO" id="GO:0005739">
    <property type="term" value="C:mitochondrion"/>
    <property type="evidence" value="ECO:0000318"/>
    <property type="project" value="GO_Central"/>
</dbReference>
<dbReference type="GO" id="GO:0120538">
    <property type="term" value="F:2-methoxy-6-polyprenolphenol 4-hydroxylase activity"/>
    <property type="evidence" value="ECO:0007669"/>
    <property type="project" value="RHEA"/>
</dbReference>
<dbReference type="GO" id="GO:0106364">
    <property type="term" value="F:4-hydroxy-3-all-trans-polyprenylbenzoate oxygenase activity"/>
    <property type="evidence" value="ECO:0007669"/>
    <property type="project" value="InterPro"/>
</dbReference>
<dbReference type="GO" id="GO:0071949">
    <property type="term" value="F:FAD binding"/>
    <property type="evidence" value="ECO:0007669"/>
    <property type="project" value="InterPro"/>
</dbReference>
<dbReference type="GO" id="GO:0016491">
    <property type="term" value="F:oxidoreductase activity"/>
    <property type="evidence" value="ECO:0000318"/>
    <property type="project" value="GO_Central"/>
</dbReference>
<dbReference type="GO" id="GO:0016712">
    <property type="term" value="F:oxidoreductase activity, acting on paired donors, with incorporation or reduction of molecular oxygen, reduced flavin or flavoprotein as one donor, and incorporation of one atom of oxygen"/>
    <property type="evidence" value="ECO:0007669"/>
    <property type="project" value="UniProtKB-UniRule"/>
</dbReference>
<dbReference type="GO" id="GO:0006744">
    <property type="term" value="P:ubiquinone biosynthetic process"/>
    <property type="evidence" value="ECO:0000318"/>
    <property type="project" value="GO_Central"/>
</dbReference>
<dbReference type="FunFam" id="3.50.50.60:FF:000021">
    <property type="entry name" value="Ubiquinone biosynthesis monooxygenase COQ6"/>
    <property type="match status" value="1"/>
</dbReference>
<dbReference type="FunFam" id="3.50.50.60:FF:000791">
    <property type="entry name" value="Ubiquinone biosynthesis monooxygenase COQ6, mitochondrial"/>
    <property type="match status" value="1"/>
</dbReference>
<dbReference type="Gene3D" id="3.50.50.60">
    <property type="entry name" value="FAD/NAD(P)-binding domain"/>
    <property type="match status" value="2"/>
</dbReference>
<dbReference type="HAMAP" id="MF_03193">
    <property type="entry name" value="COQ6_monooxygenase"/>
    <property type="match status" value="1"/>
</dbReference>
<dbReference type="InterPro" id="IPR002938">
    <property type="entry name" value="FAD-bd"/>
</dbReference>
<dbReference type="InterPro" id="IPR036188">
    <property type="entry name" value="FAD/NAD-bd_sf"/>
</dbReference>
<dbReference type="InterPro" id="IPR010971">
    <property type="entry name" value="UbiH/COQ6"/>
</dbReference>
<dbReference type="InterPro" id="IPR051205">
    <property type="entry name" value="UbiH/COQ6_monooxygenase"/>
</dbReference>
<dbReference type="InterPro" id="IPR000689">
    <property type="entry name" value="UbQ_mOase_COQ6"/>
</dbReference>
<dbReference type="NCBIfam" id="TIGR01988">
    <property type="entry name" value="Ubi-OHases"/>
    <property type="match status" value="1"/>
</dbReference>
<dbReference type="PANTHER" id="PTHR43876">
    <property type="entry name" value="UBIQUINONE BIOSYNTHESIS MONOOXYGENASE COQ6, MITOCHONDRIAL"/>
    <property type="match status" value="1"/>
</dbReference>
<dbReference type="PANTHER" id="PTHR43876:SF7">
    <property type="entry name" value="UBIQUINONE BIOSYNTHESIS MONOOXYGENASE COQ6, MITOCHONDRIAL"/>
    <property type="match status" value="1"/>
</dbReference>
<dbReference type="Pfam" id="PF01494">
    <property type="entry name" value="FAD_binding_3"/>
    <property type="match status" value="2"/>
</dbReference>
<dbReference type="PRINTS" id="PR00420">
    <property type="entry name" value="RNGMNOXGNASE"/>
</dbReference>
<dbReference type="SUPFAM" id="SSF51905">
    <property type="entry name" value="FAD/NAD(P)-binding domain"/>
    <property type="match status" value="1"/>
</dbReference>